<proteinExistence type="inferred from homology"/>
<gene>
    <name evidence="1" type="primary">rhlB</name>
    <name type="ordered locus">Ssed_4109</name>
</gene>
<dbReference type="EC" id="3.6.4.13" evidence="1"/>
<dbReference type="EMBL" id="CP000821">
    <property type="protein sequence ID" value="ABV38713.1"/>
    <property type="molecule type" value="Genomic_DNA"/>
</dbReference>
<dbReference type="RefSeq" id="WP_012144443.1">
    <property type="nucleotide sequence ID" value="NC_009831.1"/>
</dbReference>
<dbReference type="SMR" id="A8G0U0"/>
<dbReference type="STRING" id="425104.Ssed_4109"/>
<dbReference type="KEGG" id="sse:Ssed_4109"/>
<dbReference type="eggNOG" id="COG0513">
    <property type="taxonomic scope" value="Bacteria"/>
</dbReference>
<dbReference type="HOGENOM" id="CLU_003041_1_3_6"/>
<dbReference type="OrthoDB" id="9805696at2"/>
<dbReference type="Proteomes" id="UP000002015">
    <property type="component" value="Chromosome"/>
</dbReference>
<dbReference type="GO" id="GO:0005829">
    <property type="term" value="C:cytosol"/>
    <property type="evidence" value="ECO:0007669"/>
    <property type="project" value="TreeGrafter"/>
</dbReference>
<dbReference type="GO" id="GO:0005524">
    <property type="term" value="F:ATP binding"/>
    <property type="evidence" value="ECO:0007669"/>
    <property type="project" value="UniProtKB-UniRule"/>
</dbReference>
<dbReference type="GO" id="GO:0016887">
    <property type="term" value="F:ATP hydrolysis activity"/>
    <property type="evidence" value="ECO:0007669"/>
    <property type="project" value="RHEA"/>
</dbReference>
<dbReference type="GO" id="GO:0003723">
    <property type="term" value="F:RNA binding"/>
    <property type="evidence" value="ECO:0007669"/>
    <property type="project" value="UniProtKB-UniRule"/>
</dbReference>
<dbReference type="GO" id="GO:0003724">
    <property type="term" value="F:RNA helicase activity"/>
    <property type="evidence" value="ECO:0007669"/>
    <property type="project" value="UniProtKB-UniRule"/>
</dbReference>
<dbReference type="GO" id="GO:0006401">
    <property type="term" value="P:RNA catabolic process"/>
    <property type="evidence" value="ECO:0007669"/>
    <property type="project" value="UniProtKB-UniRule"/>
</dbReference>
<dbReference type="CDD" id="cd00268">
    <property type="entry name" value="DEADc"/>
    <property type="match status" value="1"/>
</dbReference>
<dbReference type="CDD" id="cd18787">
    <property type="entry name" value="SF2_C_DEAD"/>
    <property type="match status" value="1"/>
</dbReference>
<dbReference type="FunFam" id="3.40.50.300:FF:000312">
    <property type="entry name" value="ATP-dependent RNA helicase RhlB"/>
    <property type="match status" value="1"/>
</dbReference>
<dbReference type="Gene3D" id="3.40.50.300">
    <property type="entry name" value="P-loop containing nucleotide triphosphate hydrolases"/>
    <property type="match status" value="2"/>
</dbReference>
<dbReference type="HAMAP" id="MF_00661">
    <property type="entry name" value="DEAD_helicase_RhlB"/>
    <property type="match status" value="1"/>
</dbReference>
<dbReference type="InterPro" id="IPR011545">
    <property type="entry name" value="DEAD/DEAH_box_helicase_dom"/>
</dbReference>
<dbReference type="InterPro" id="IPR050079">
    <property type="entry name" value="DEAD_box_RNA_helicase"/>
</dbReference>
<dbReference type="InterPro" id="IPR014001">
    <property type="entry name" value="Helicase_ATP-bd"/>
</dbReference>
<dbReference type="InterPro" id="IPR001650">
    <property type="entry name" value="Helicase_C-like"/>
</dbReference>
<dbReference type="InterPro" id="IPR027417">
    <property type="entry name" value="P-loop_NTPase"/>
</dbReference>
<dbReference type="InterPro" id="IPR000629">
    <property type="entry name" value="RNA-helicase_DEAD-box_CS"/>
</dbReference>
<dbReference type="InterPro" id="IPR023554">
    <property type="entry name" value="RNA_helicase_ATP-dep_RhlB"/>
</dbReference>
<dbReference type="InterPro" id="IPR014014">
    <property type="entry name" value="RNA_helicase_DEAD_Q_motif"/>
</dbReference>
<dbReference type="NCBIfam" id="NF003419">
    <property type="entry name" value="PRK04837.1"/>
    <property type="match status" value="1"/>
</dbReference>
<dbReference type="PANTHER" id="PTHR47959:SF10">
    <property type="entry name" value="ATP-DEPENDENT RNA HELICASE RHLB"/>
    <property type="match status" value="1"/>
</dbReference>
<dbReference type="PANTHER" id="PTHR47959">
    <property type="entry name" value="ATP-DEPENDENT RNA HELICASE RHLE-RELATED"/>
    <property type="match status" value="1"/>
</dbReference>
<dbReference type="Pfam" id="PF00270">
    <property type="entry name" value="DEAD"/>
    <property type="match status" value="1"/>
</dbReference>
<dbReference type="Pfam" id="PF00271">
    <property type="entry name" value="Helicase_C"/>
    <property type="match status" value="1"/>
</dbReference>
<dbReference type="SMART" id="SM00487">
    <property type="entry name" value="DEXDc"/>
    <property type="match status" value="1"/>
</dbReference>
<dbReference type="SMART" id="SM00490">
    <property type="entry name" value="HELICc"/>
    <property type="match status" value="1"/>
</dbReference>
<dbReference type="SUPFAM" id="SSF52540">
    <property type="entry name" value="P-loop containing nucleoside triphosphate hydrolases"/>
    <property type="match status" value="1"/>
</dbReference>
<dbReference type="PROSITE" id="PS00039">
    <property type="entry name" value="DEAD_ATP_HELICASE"/>
    <property type="match status" value="1"/>
</dbReference>
<dbReference type="PROSITE" id="PS51192">
    <property type="entry name" value="HELICASE_ATP_BIND_1"/>
    <property type="match status" value="1"/>
</dbReference>
<dbReference type="PROSITE" id="PS51194">
    <property type="entry name" value="HELICASE_CTER"/>
    <property type="match status" value="1"/>
</dbReference>
<dbReference type="PROSITE" id="PS51195">
    <property type="entry name" value="Q_MOTIF"/>
    <property type="match status" value="1"/>
</dbReference>
<evidence type="ECO:0000255" key="1">
    <source>
        <dbReference type="HAMAP-Rule" id="MF_00661"/>
    </source>
</evidence>
<evidence type="ECO:0000256" key="2">
    <source>
        <dbReference type="SAM" id="MobiDB-lite"/>
    </source>
</evidence>
<name>RHLB_SHESH</name>
<sequence>MSETHLSNQKFADFSLQTEIKTALNESGFEYCTPIQALSLPILLQKKDIAGQAQTGTGKTLAFLVATFNHLLTTPIPEGRQLNQPRAIIMAPTRELAIQIAKDADLLAKHTGLKVGIVYGGESYEVQRKVLDKGVDILIGTTGRIIDYVRQGIINVSAIQAVVLDEADRMFDLGFIKDIRFLFRRMPDAKSRLNMLFSATLSMKVQELAYDHMNEPEKVEIAPNEKTSKNIKEEIFYPSMDEKMRLLLTLLEEDWPDKAIVFSNTKHSCEKLWSWLEGDGHRVGLLTGDVPQKKRIRILELFTEGKLDVLVATDVAARGLHISDVSHVYNYDLPDDCEDYVHRIGRTGRAGKKGVSVSFACEEYALNLPAIEEYINHTIPVTNYDSEALLDDIPAPVRVHRKHNSRPQGRSGSGGKPRSGNRNAPRRHDKTRRHS</sequence>
<organism>
    <name type="scientific">Shewanella sediminis (strain HAW-EB3)</name>
    <dbReference type="NCBI Taxonomy" id="425104"/>
    <lineage>
        <taxon>Bacteria</taxon>
        <taxon>Pseudomonadati</taxon>
        <taxon>Pseudomonadota</taxon>
        <taxon>Gammaproteobacteria</taxon>
        <taxon>Alteromonadales</taxon>
        <taxon>Shewanellaceae</taxon>
        <taxon>Shewanella</taxon>
    </lineage>
</organism>
<feature type="chain" id="PRO_1000082867" description="ATP-dependent RNA helicase RhlB">
    <location>
        <begin position="1"/>
        <end position="435"/>
    </location>
</feature>
<feature type="domain" description="Helicase ATP-binding" evidence="1">
    <location>
        <begin position="40"/>
        <end position="219"/>
    </location>
</feature>
<feature type="domain" description="Helicase C-terminal" evidence="1">
    <location>
        <begin position="243"/>
        <end position="390"/>
    </location>
</feature>
<feature type="region of interest" description="Disordered" evidence="2">
    <location>
        <begin position="395"/>
        <end position="435"/>
    </location>
</feature>
<feature type="short sequence motif" description="Q motif">
    <location>
        <begin position="9"/>
        <end position="37"/>
    </location>
</feature>
<feature type="short sequence motif" description="DEAD box">
    <location>
        <begin position="165"/>
        <end position="168"/>
    </location>
</feature>
<feature type="compositionally biased region" description="Basic residues" evidence="2">
    <location>
        <begin position="424"/>
        <end position="435"/>
    </location>
</feature>
<feature type="binding site" evidence="1">
    <location>
        <begin position="53"/>
        <end position="60"/>
    </location>
    <ligand>
        <name>ATP</name>
        <dbReference type="ChEBI" id="CHEBI:30616"/>
    </ligand>
</feature>
<reference key="1">
    <citation type="submission" date="2007-08" db="EMBL/GenBank/DDBJ databases">
        <title>Complete sequence of Shewanella sediminis HAW-EB3.</title>
        <authorList>
            <consortium name="US DOE Joint Genome Institute"/>
            <person name="Copeland A."/>
            <person name="Lucas S."/>
            <person name="Lapidus A."/>
            <person name="Barry K."/>
            <person name="Glavina del Rio T."/>
            <person name="Dalin E."/>
            <person name="Tice H."/>
            <person name="Pitluck S."/>
            <person name="Chertkov O."/>
            <person name="Brettin T."/>
            <person name="Bruce D."/>
            <person name="Detter J.C."/>
            <person name="Han C."/>
            <person name="Schmutz J."/>
            <person name="Larimer F."/>
            <person name="Land M."/>
            <person name="Hauser L."/>
            <person name="Kyrpides N."/>
            <person name="Kim E."/>
            <person name="Zhao J.-S."/>
            <person name="Richardson P."/>
        </authorList>
    </citation>
    <scope>NUCLEOTIDE SEQUENCE [LARGE SCALE GENOMIC DNA]</scope>
    <source>
        <strain>HAW-EB3</strain>
    </source>
</reference>
<protein>
    <recommendedName>
        <fullName evidence="1">ATP-dependent RNA helicase RhlB</fullName>
        <ecNumber evidence="1">3.6.4.13</ecNumber>
    </recommendedName>
</protein>
<accession>A8G0U0</accession>
<comment type="function">
    <text evidence="1">DEAD-box RNA helicase involved in RNA degradation. Has RNA-dependent ATPase activity and unwinds double-stranded RNA.</text>
</comment>
<comment type="catalytic activity">
    <reaction evidence="1">
        <text>ATP + H2O = ADP + phosphate + H(+)</text>
        <dbReference type="Rhea" id="RHEA:13065"/>
        <dbReference type="ChEBI" id="CHEBI:15377"/>
        <dbReference type="ChEBI" id="CHEBI:15378"/>
        <dbReference type="ChEBI" id="CHEBI:30616"/>
        <dbReference type="ChEBI" id="CHEBI:43474"/>
        <dbReference type="ChEBI" id="CHEBI:456216"/>
        <dbReference type="EC" id="3.6.4.13"/>
    </reaction>
</comment>
<comment type="subunit">
    <text evidence="1">Component of the RNA degradosome, which is a multiprotein complex involved in RNA processing and mRNA degradation.</text>
</comment>
<comment type="subcellular location">
    <subcellularLocation>
        <location evidence="1">Cytoplasm</location>
    </subcellularLocation>
</comment>
<comment type="similarity">
    <text evidence="1">Belongs to the DEAD box helicase family. RhlB subfamily.</text>
</comment>
<keyword id="KW-0067">ATP-binding</keyword>
<keyword id="KW-0963">Cytoplasm</keyword>
<keyword id="KW-0347">Helicase</keyword>
<keyword id="KW-0378">Hydrolase</keyword>
<keyword id="KW-0547">Nucleotide-binding</keyword>
<keyword id="KW-1185">Reference proteome</keyword>
<keyword id="KW-0694">RNA-binding</keyword>